<accession>P12212</accession>
<accession>Q53ZE2</accession>
<sequence length="230" mass="27097">MKKKKALPSFLYLVFIVLLPWGVSFSFNKCLELWIKNWWNTRQSQTLLTAIQEKRVLERFMELEDLFILDEMIKEKPNTHVQNPPIGIRKEIIQLAKIDNEGHLHIILHFSTNIICLAILSGSFFLGKEELVILNSWVQEFFYNLNDSVKAFFILLVTDFFVGFHSTRGWELLIRWVYNDLGWVPNELIFTIFVCSFPVILDTCLKFWVFFCLNRLSPSLVVIYHSISEA</sequence>
<comment type="function">
    <text evidence="1">Contributes to K(+)/H(+) antiport activity by supporting proton efflux to control proton extrusion and homeostasis in chloroplasts in a light-dependent manner to modulate photosynthesis. Prevents excessive induction of non-photochemical quenching (NPQ) under continuous-light conditions. Indirectly promotes efficient inorganic carbon uptake into chloroplasts.</text>
</comment>
<comment type="catalytic activity">
    <reaction evidence="1">
        <text>K(+)(in) + H(+)(out) = K(+)(out) + H(+)(in)</text>
        <dbReference type="Rhea" id="RHEA:29467"/>
        <dbReference type="ChEBI" id="CHEBI:15378"/>
        <dbReference type="ChEBI" id="CHEBI:29103"/>
    </reaction>
</comment>
<comment type="subcellular location">
    <subcellularLocation>
        <location evidence="1">Plastid</location>
        <location evidence="1">Chloroplast inner membrane</location>
        <topology evidence="1">Multi-pass membrane protein</topology>
    </subcellularLocation>
</comment>
<comment type="similarity">
    <text evidence="1 2">Belongs to the CemA family.</text>
</comment>
<gene>
    <name evidence="1" type="primary">cemA</name>
    <name type="synonym">ycf10</name>
    <name type="ordered locus">LOC_Osp1g00470</name>
</gene>
<keyword id="KW-0050">Antiport</keyword>
<keyword id="KW-0150">Chloroplast</keyword>
<keyword id="KW-0375">Hydrogen ion transport</keyword>
<keyword id="KW-0406">Ion transport</keyword>
<keyword id="KW-0472">Membrane</keyword>
<keyword id="KW-0934">Plastid</keyword>
<keyword id="KW-1001">Plastid inner membrane</keyword>
<keyword id="KW-0630">Potassium</keyword>
<keyword id="KW-0633">Potassium transport</keyword>
<keyword id="KW-1185">Reference proteome</keyword>
<keyword id="KW-0812">Transmembrane</keyword>
<keyword id="KW-1133">Transmembrane helix</keyword>
<keyword id="KW-0813">Transport</keyword>
<evidence type="ECO:0000255" key="1">
    <source>
        <dbReference type="HAMAP-Rule" id="MF_01308"/>
    </source>
</evidence>
<evidence type="ECO:0000305" key="2"/>
<proteinExistence type="inferred from homology"/>
<dbReference type="EMBL" id="AY323949">
    <property type="protein sequence ID" value="AAQ19047.1"/>
    <property type="molecule type" value="Genomic_DNA"/>
</dbReference>
<dbReference type="EMBL" id="X15901">
    <property type="protein sequence ID" value="CAA33960.1"/>
    <property type="molecule type" value="Genomic_DNA"/>
</dbReference>
<dbReference type="EMBL" id="AY522330">
    <property type="status" value="NOT_ANNOTATED_CDS"/>
    <property type="molecule type" value="Genomic_DNA"/>
</dbReference>
<dbReference type="PIR" id="S05118">
    <property type="entry name" value="S05118"/>
</dbReference>
<dbReference type="RefSeq" id="NP_039398.1">
    <property type="nucleotide sequence ID" value="NC_001320.1"/>
</dbReference>
<dbReference type="RefSeq" id="YP_009305316.1">
    <property type="nucleotide sequence ID" value="NC_031333.1"/>
</dbReference>
<dbReference type="FunCoup" id="P12212">
    <property type="interactions" value="147"/>
</dbReference>
<dbReference type="STRING" id="39947.P12212"/>
<dbReference type="PaxDb" id="39947-P12212"/>
<dbReference type="GeneID" id="29141382"/>
<dbReference type="GeneID" id="3131470"/>
<dbReference type="KEGG" id="dosa:CAA33960.1"/>
<dbReference type="KEGG" id="osa:3131470"/>
<dbReference type="InParanoid" id="P12212"/>
<dbReference type="OrthoDB" id="601185at2759"/>
<dbReference type="Proteomes" id="UP000059680">
    <property type="component" value="Chloroplast"/>
</dbReference>
<dbReference type="GO" id="GO:0009706">
    <property type="term" value="C:chloroplast inner membrane"/>
    <property type="evidence" value="ECO:0007669"/>
    <property type="project" value="UniProtKB-SubCell"/>
</dbReference>
<dbReference type="GO" id="GO:0009536">
    <property type="term" value="C:plastid"/>
    <property type="evidence" value="ECO:0000250"/>
    <property type="project" value="Gramene"/>
</dbReference>
<dbReference type="GO" id="GO:0015297">
    <property type="term" value="F:antiporter activity"/>
    <property type="evidence" value="ECO:0007669"/>
    <property type="project" value="UniProtKB-KW"/>
</dbReference>
<dbReference type="GO" id="GO:0015078">
    <property type="term" value="F:proton transmembrane transporter activity"/>
    <property type="evidence" value="ECO:0007669"/>
    <property type="project" value="UniProtKB-UniRule"/>
</dbReference>
<dbReference type="GO" id="GO:0006813">
    <property type="term" value="P:potassium ion transport"/>
    <property type="evidence" value="ECO:0007669"/>
    <property type="project" value="UniProtKB-UniRule"/>
</dbReference>
<dbReference type="HAMAP" id="MF_01308">
    <property type="entry name" value="CemA_PxcA"/>
    <property type="match status" value="1"/>
</dbReference>
<dbReference type="InterPro" id="IPR004282">
    <property type="entry name" value="CemA"/>
</dbReference>
<dbReference type="PANTHER" id="PTHR33650:SF2">
    <property type="entry name" value="CHLOROPLAST ENVELOPE MEMBRANE PROTEIN"/>
    <property type="match status" value="1"/>
</dbReference>
<dbReference type="PANTHER" id="PTHR33650">
    <property type="entry name" value="CHLOROPLAST ENVELOPE MEMBRANE PROTEIN-RELATED"/>
    <property type="match status" value="1"/>
</dbReference>
<dbReference type="Pfam" id="PF03040">
    <property type="entry name" value="CemA"/>
    <property type="match status" value="1"/>
</dbReference>
<geneLocation type="chloroplast"/>
<protein>
    <recommendedName>
        <fullName evidence="1">Potassium/proton antiporter CemA</fullName>
    </recommendedName>
    <alternativeName>
        <fullName evidence="1">Chloroplast envelope membrane protein A</fullName>
        <shortName evidence="1">CemA</shortName>
    </alternativeName>
</protein>
<feature type="chain" id="PRO_0000216653" description="Potassium/proton antiporter CemA">
    <location>
        <begin position="1"/>
        <end position="230"/>
    </location>
</feature>
<feature type="transmembrane region" description="Helical" evidence="1">
    <location>
        <begin position="7"/>
        <end position="27"/>
    </location>
</feature>
<feature type="transmembrane region" description="Helical" evidence="1">
    <location>
        <begin position="106"/>
        <end position="126"/>
    </location>
</feature>
<feature type="transmembrane region" description="Helical" evidence="1">
    <location>
        <begin position="145"/>
        <end position="165"/>
    </location>
</feature>
<feature type="transmembrane region" description="Helical" evidence="1">
    <location>
        <begin position="181"/>
        <end position="201"/>
    </location>
</feature>
<reference key="1">
    <citation type="submission" date="2003-06" db="EMBL/GenBank/DDBJ databases">
        <authorList>
            <person name="Yang Q."/>
        </authorList>
    </citation>
    <scope>NUCLEOTIDE SEQUENCE [GENOMIC DNA]</scope>
</reference>
<reference key="2">
    <citation type="journal article" date="1989" name="Mol. Gen. Genet.">
        <title>The complete sequence of the rice (Oryza sativa) chloroplast genome: intermolecular recombination between distinct tRNA genes accounts for a major plastid DNA inversion during the evolution of the cereals.</title>
        <authorList>
            <person name="Hiratsuka J."/>
            <person name="Shimada H."/>
            <person name="Whittier R."/>
            <person name="Ishibashi T."/>
            <person name="Sakamoto M."/>
            <person name="Mori M."/>
            <person name="Kondo C."/>
            <person name="Honji Y."/>
            <person name="Sun C.-R."/>
            <person name="Meng B.-Y."/>
            <person name="Li Y.-Q."/>
            <person name="Kanno A."/>
            <person name="Nishizawa Y."/>
            <person name="Hirai A."/>
            <person name="Shinozaki K."/>
            <person name="Sugiura M."/>
        </authorList>
    </citation>
    <scope>NUCLEOTIDE SEQUENCE [LARGE SCALE GENOMIC DNA]</scope>
    <source>
        <strain>cv. Nipponbare</strain>
    </source>
</reference>
<reference key="3">
    <citation type="journal article" date="2004" name="Plant Physiol.">
        <title>A comparison of rice chloroplast genomes.</title>
        <authorList>
            <person name="Tang J."/>
            <person name="Xia H."/>
            <person name="Cao M."/>
            <person name="Zhang X."/>
            <person name="Zeng W."/>
            <person name="Hu S."/>
            <person name="Tong W."/>
            <person name="Wang J."/>
            <person name="Wang J."/>
            <person name="Yu J."/>
            <person name="Yang H."/>
            <person name="Zhu L."/>
        </authorList>
    </citation>
    <scope>NUCLEOTIDE SEQUENCE [LARGE SCALE GENOMIC DNA]</scope>
    <source>
        <strain>cv. Nipponbare</strain>
    </source>
</reference>
<organism>
    <name type="scientific">Oryza sativa subsp. japonica</name>
    <name type="common">Rice</name>
    <dbReference type="NCBI Taxonomy" id="39947"/>
    <lineage>
        <taxon>Eukaryota</taxon>
        <taxon>Viridiplantae</taxon>
        <taxon>Streptophyta</taxon>
        <taxon>Embryophyta</taxon>
        <taxon>Tracheophyta</taxon>
        <taxon>Spermatophyta</taxon>
        <taxon>Magnoliopsida</taxon>
        <taxon>Liliopsida</taxon>
        <taxon>Poales</taxon>
        <taxon>Poaceae</taxon>
        <taxon>BOP clade</taxon>
        <taxon>Oryzoideae</taxon>
        <taxon>Oryzeae</taxon>
        <taxon>Oryzinae</taxon>
        <taxon>Oryza</taxon>
        <taxon>Oryza sativa</taxon>
    </lineage>
</organism>
<name>CEMA_ORYSJ</name>